<dbReference type="EC" id="6.1.1.15" evidence="2"/>
<dbReference type="EMBL" id="AL138651">
    <property type="protein sequence ID" value="CAB71872.1"/>
    <property type="molecule type" value="Genomic_DNA"/>
</dbReference>
<dbReference type="EMBL" id="CP002686">
    <property type="protein sequence ID" value="AEE80312.1"/>
    <property type="molecule type" value="Genomic_DNA"/>
</dbReference>
<dbReference type="EMBL" id="CP002686">
    <property type="protein sequence ID" value="AEE80313.1"/>
    <property type="molecule type" value="Genomic_DNA"/>
</dbReference>
<dbReference type="EMBL" id="AY059812">
    <property type="protein sequence ID" value="AAL24294.1"/>
    <property type="molecule type" value="mRNA"/>
</dbReference>
<dbReference type="EMBL" id="AY128720">
    <property type="protein sequence ID" value="AAM91120.1"/>
    <property type="molecule type" value="mRNA"/>
</dbReference>
<dbReference type="PIR" id="T48004">
    <property type="entry name" value="T48004"/>
</dbReference>
<dbReference type="RefSeq" id="NP_191771.1">
    <property type="nucleotide sequence ID" value="NM_116077.3"/>
</dbReference>
<dbReference type="RefSeq" id="NP_850736.1">
    <property type="nucleotide sequence ID" value="NM_180405.1"/>
</dbReference>
<dbReference type="SMR" id="Q9M1R2"/>
<dbReference type="FunCoup" id="Q9M1R2">
    <property type="interactions" value="2032"/>
</dbReference>
<dbReference type="IntAct" id="Q9M1R2">
    <property type="interactions" value="3"/>
</dbReference>
<dbReference type="STRING" id="3702.Q9M1R2"/>
<dbReference type="iPTMnet" id="Q9M1R2"/>
<dbReference type="PaxDb" id="3702-AT3G62120.1"/>
<dbReference type="ProteomicsDB" id="228471"/>
<dbReference type="EnsemblPlants" id="AT3G62120.1">
    <property type="protein sequence ID" value="AT3G62120.1"/>
    <property type="gene ID" value="AT3G62120"/>
</dbReference>
<dbReference type="EnsemblPlants" id="AT3G62120.2">
    <property type="protein sequence ID" value="AT3G62120.2"/>
    <property type="gene ID" value="AT3G62120"/>
</dbReference>
<dbReference type="GeneID" id="825385"/>
<dbReference type="Gramene" id="AT3G62120.1">
    <property type="protein sequence ID" value="AT3G62120.1"/>
    <property type="gene ID" value="AT3G62120"/>
</dbReference>
<dbReference type="Gramene" id="AT3G62120.2">
    <property type="protein sequence ID" value="AT3G62120.2"/>
    <property type="gene ID" value="AT3G62120"/>
</dbReference>
<dbReference type="KEGG" id="ath:AT3G62120"/>
<dbReference type="Araport" id="AT3G62120"/>
<dbReference type="TAIR" id="AT3G62120">
    <property type="gene designation" value="PRORS-CYT"/>
</dbReference>
<dbReference type="eggNOG" id="KOG4163">
    <property type="taxonomic scope" value="Eukaryota"/>
</dbReference>
<dbReference type="HOGENOM" id="CLU_001882_4_1_1"/>
<dbReference type="InParanoid" id="Q9M1R2"/>
<dbReference type="OMA" id="WCDEVDV"/>
<dbReference type="PhylomeDB" id="Q9M1R2"/>
<dbReference type="CD-CODE" id="4299E36E">
    <property type="entry name" value="Nucleolus"/>
</dbReference>
<dbReference type="PRO" id="PR:Q9M1R2"/>
<dbReference type="Proteomes" id="UP000006548">
    <property type="component" value="Chromosome 3"/>
</dbReference>
<dbReference type="ExpressionAtlas" id="Q9M1R2">
    <property type="expression patterns" value="baseline and differential"/>
</dbReference>
<dbReference type="GO" id="GO:0005829">
    <property type="term" value="C:cytosol"/>
    <property type="evidence" value="ECO:0007005"/>
    <property type="project" value="TAIR"/>
</dbReference>
<dbReference type="GO" id="GO:0009506">
    <property type="term" value="C:plasmodesma"/>
    <property type="evidence" value="ECO:0007005"/>
    <property type="project" value="TAIR"/>
</dbReference>
<dbReference type="GO" id="GO:0005524">
    <property type="term" value="F:ATP binding"/>
    <property type="evidence" value="ECO:0007669"/>
    <property type="project" value="UniProtKB-KW"/>
</dbReference>
<dbReference type="GO" id="GO:0004827">
    <property type="term" value="F:proline-tRNA ligase activity"/>
    <property type="evidence" value="ECO:0000314"/>
    <property type="project" value="TAIR"/>
</dbReference>
<dbReference type="GO" id="GO:0006433">
    <property type="term" value="P:prolyl-tRNA aminoacylation"/>
    <property type="evidence" value="ECO:0007669"/>
    <property type="project" value="InterPro"/>
</dbReference>
<dbReference type="CDD" id="cd00862">
    <property type="entry name" value="ProRS_anticodon_zinc"/>
    <property type="match status" value="1"/>
</dbReference>
<dbReference type="CDD" id="cd00778">
    <property type="entry name" value="ProRS_core_arch_euk"/>
    <property type="match status" value="1"/>
</dbReference>
<dbReference type="FunFam" id="3.30.930.10:FF:000007">
    <property type="entry name" value="Bifunctional glutamate/proline--tRNA ligase"/>
    <property type="match status" value="1"/>
</dbReference>
<dbReference type="FunFam" id="3.40.50.800:FF:000005">
    <property type="entry name" value="bifunctional glutamate/proline--tRNA ligase"/>
    <property type="match status" value="1"/>
</dbReference>
<dbReference type="FunFam" id="3.30.110.30:FF:000003">
    <property type="entry name" value="Proline--tRNA ligase, cytoplasmic"/>
    <property type="match status" value="1"/>
</dbReference>
<dbReference type="Gene3D" id="3.40.50.800">
    <property type="entry name" value="Anticodon-binding domain"/>
    <property type="match status" value="1"/>
</dbReference>
<dbReference type="Gene3D" id="3.30.930.10">
    <property type="entry name" value="Bira Bifunctional Protein, Domain 2"/>
    <property type="match status" value="1"/>
</dbReference>
<dbReference type="Gene3D" id="3.30.110.30">
    <property type="entry name" value="C-terminal domain of ProRS"/>
    <property type="match status" value="1"/>
</dbReference>
<dbReference type="HAMAP" id="MF_01571">
    <property type="entry name" value="Pro_tRNA_synth_type3"/>
    <property type="match status" value="1"/>
</dbReference>
<dbReference type="InterPro" id="IPR002314">
    <property type="entry name" value="aa-tRNA-synt_IIb"/>
</dbReference>
<dbReference type="InterPro" id="IPR006195">
    <property type="entry name" value="aa-tRNA-synth_II"/>
</dbReference>
<dbReference type="InterPro" id="IPR045864">
    <property type="entry name" value="aa-tRNA-synth_II/BPL/LPL"/>
</dbReference>
<dbReference type="InterPro" id="IPR004154">
    <property type="entry name" value="Anticodon-bd"/>
</dbReference>
<dbReference type="InterPro" id="IPR036621">
    <property type="entry name" value="Anticodon-bd_dom_sf"/>
</dbReference>
<dbReference type="InterPro" id="IPR002316">
    <property type="entry name" value="Pro-tRNA-ligase_IIa"/>
</dbReference>
<dbReference type="InterPro" id="IPR004499">
    <property type="entry name" value="Pro-tRNA-ligase_IIa_arc-type"/>
</dbReference>
<dbReference type="InterPro" id="IPR016061">
    <property type="entry name" value="Pro-tRNA_ligase_II_C"/>
</dbReference>
<dbReference type="InterPro" id="IPR017449">
    <property type="entry name" value="Pro-tRNA_synth_II"/>
</dbReference>
<dbReference type="InterPro" id="IPR033721">
    <property type="entry name" value="ProRS_core_arch_euk"/>
</dbReference>
<dbReference type="NCBIfam" id="TIGR00408">
    <property type="entry name" value="proS_fam_I"/>
    <property type="match status" value="1"/>
</dbReference>
<dbReference type="PANTHER" id="PTHR43382:SF2">
    <property type="entry name" value="BIFUNCTIONAL GLUTAMATE_PROLINE--TRNA LIGASE"/>
    <property type="match status" value="1"/>
</dbReference>
<dbReference type="PANTHER" id="PTHR43382">
    <property type="entry name" value="PROLYL-TRNA SYNTHETASE"/>
    <property type="match status" value="1"/>
</dbReference>
<dbReference type="Pfam" id="PF03129">
    <property type="entry name" value="HGTP_anticodon"/>
    <property type="match status" value="1"/>
</dbReference>
<dbReference type="Pfam" id="PF09180">
    <property type="entry name" value="ProRS-C_1"/>
    <property type="match status" value="1"/>
</dbReference>
<dbReference type="Pfam" id="PF00587">
    <property type="entry name" value="tRNA-synt_2b"/>
    <property type="match status" value="1"/>
</dbReference>
<dbReference type="PRINTS" id="PR01046">
    <property type="entry name" value="TRNASYNTHPRO"/>
</dbReference>
<dbReference type="SMART" id="SM00946">
    <property type="entry name" value="ProRS-C_1"/>
    <property type="match status" value="1"/>
</dbReference>
<dbReference type="SUPFAM" id="SSF64586">
    <property type="entry name" value="C-terminal domain of ProRS"/>
    <property type="match status" value="1"/>
</dbReference>
<dbReference type="SUPFAM" id="SSF52954">
    <property type="entry name" value="Class II aaRS ABD-related"/>
    <property type="match status" value="1"/>
</dbReference>
<dbReference type="SUPFAM" id="SSF55681">
    <property type="entry name" value="Class II aaRS and biotin synthetases"/>
    <property type="match status" value="1"/>
</dbReference>
<dbReference type="PROSITE" id="PS50862">
    <property type="entry name" value="AA_TRNA_LIGASE_II"/>
    <property type="match status" value="1"/>
</dbReference>
<accession>Q9M1R2</accession>
<reference key="1">
    <citation type="journal article" date="2000" name="Nature">
        <title>Sequence and analysis of chromosome 3 of the plant Arabidopsis thaliana.</title>
        <authorList>
            <person name="Salanoubat M."/>
            <person name="Lemcke K."/>
            <person name="Rieger M."/>
            <person name="Ansorge W."/>
            <person name="Unseld M."/>
            <person name="Fartmann B."/>
            <person name="Valle G."/>
            <person name="Bloecker H."/>
            <person name="Perez-Alonso M."/>
            <person name="Obermaier B."/>
            <person name="Delseny M."/>
            <person name="Boutry M."/>
            <person name="Grivell L.A."/>
            <person name="Mache R."/>
            <person name="Puigdomenech P."/>
            <person name="De Simone V."/>
            <person name="Choisne N."/>
            <person name="Artiguenave F."/>
            <person name="Robert C."/>
            <person name="Brottier P."/>
            <person name="Wincker P."/>
            <person name="Cattolico L."/>
            <person name="Weissenbach J."/>
            <person name="Saurin W."/>
            <person name="Quetier F."/>
            <person name="Schaefer M."/>
            <person name="Mueller-Auer S."/>
            <person name="Gabel C."/>
            <person name="Fuchs M."/>
            <person name="Benes V."/>
            <person name="Wurmbach E."/>
            <person name="Drzonek H."/>
            <person name="Erfle H."/>
            <person name="Jordan N."/>
            <person name="Bangert S."/>
            <person name="Wiedelmann R."/>
            <person name="Kranz H."/>
            <person name="Voss H."/>
            <person name="Holland R."/>
            <person name="Brandt P."/>
            <person name="Nyakatura G."/>
            <person name="Vezzi A."/>
            <person name="D'Angelo M."/>
            <person name="Pallavicini A."/>
            <person name="Toppo S."/>
            <person name="Simionati B."/>
            <person name="Conrad A."/>
            <person name="Hornischer K."/>
            <person name="Kauer G."/>
            <person name="Loehnert T.-H."/>
            <person name="Nordsiek G."/>
            <person name="Reichelt J."/>
            <person name="Scharfe M."/>
            <person name="Schoen O."/>
            <person name="Bargues M."/>
            <person name="Terol J."/>
            <person name="Climent J."/>
            <person name="Navarro P."/>
            <person name="Collado C."/>
            <person name="Perez-Perez A."/>
            <person name="Ottenwaelder B."/>
            <person name="Duchemin D."/>
            <person name="Cooke R."/>
            <person name="Laudie M."/>
            <person name="Berger-Llauro C."/>
            <person name="Purnelle B."/>
            <person name="Masuy D."/>
            <person name="de Haan M."/>
            <person name="Maarse A.C."/>
            <person name="Alcaraz J.-P."/>
            <person name="Cottet A."/>
            <person name="Casacuberta E."/>
            <person name="Monfort A."/>
            <person name="Argiriou A."/>
            <person name="Flores M."/>
            <person name="Liguori R."/>
            <person name="Vitale D."/>
            <person name="Mannhaupt G."/>
            <person name="Haase D."/>
            <person name="Schoof H."/>
            <person name="Rudd S."/>
            <person name="Zaccaria P."/>
            <person name="Mewes H.-W."/>
            <person name="Mayer K.F.X."/>
            <person name="Kaul S."/>
            <person name="Town C.D."/>
            <person name="Koo H.L."/>
            <person name="Tallon L.J."/>
            <person name="Jenkins J."/>
            <person name="Rooney T."/>
            <person name="Rizzo M."/>
            <person name="Walts A."/>
            <person name="Utterback T."/>
            <person name="Fujii C.Y."/>
            <person name="Shea T.P."/>
            <person name="Creasy T.H."/>
            <person name="Haas B."/>
            <person name="Maiti R."/>
            <person name="Wu D."/>
            <person name="Peterson J."/>
            <person name="Van Aken S."/>
            <person name="Pai G."/>
            <person name="Militscher J."/>
            <person name="Sellers P."/>
            <person name="Gill J.E."/>
            <person name="Feldblyum T.V."/>
            <person name="Preuss D."/>
            <person name="Lin X."/>
            <person name="Nierman W.C."/>
            <person name="Salzberg S.L."/>
            <person name="White O."/>
            <person name="Venter J.C."/>
            <person name="Fraser C.M."/>
            <person name="Kaneko T."/>
            <person name="Nakamura Y."/>
            <person name="Sato S."/>
            <person name="Kato T."/>
            <person name="Asamizu E."/>
            <person name="Sasamoto S."/>
            <person name="Kimura T."/>
            <person name="Idesawa K."/>
            <person name="Kawashima K."/>
            <person name="Kishida Y."/>
            <person name="Kiyokawa C."/>
            <person name="Kohara M."/>
            <person name="Matsumoto M."/>
            <person name="Matsuno A."/>
            <person name="Muraki A."/>
            <person name="Nakayama S."/>
            <person name="Nakazaki N."/>
            <person name="Shinpo S."/>
            <person name="Takeuchi C."/>
            <person name="Wada T."/>
            <person name="Watanabe A."/>
            <person name="Yamada M."/>
            <person name="Yasuda M."/>
            <person name="Tabata S."/>
        </authorList>
    </citation>
    <scope>NUCLEOTIDE SEQUENCE [LARGE SCALE GENOMIC DNA]</scope>
    <source>
        <strain>cv. Columbia</strain>
    </source>
</reference>
<reference key="2">
    <citation type="journal article" date="2017" name="Plant J.">
        <title>Araport11: a complete reannotation of the Arabidopsis thaliana reference genome.</title>
        <authorList>
            <person name="Cheng C.Y."/>
            <person name="Krishnakumar V."/>
            <person name="Chan A.P."/>
            <person name="Thibaud-Nissen F."/>
            <person name="Schobel S."/>
            <person name="Town C.D."/>
        </authorList>
    </citation>
    <scope>GENOME REANNOTATION</scope>
    <source>
        <strain>cv. Columbia</strain>
    </source>
</reference>
<reference key="3">
    <citation type="journal article" date="2003" name="Science">
        <title>Empirical analysis of transcriptional activity in the Arabidopsis genome.</title>
        <authorList>
            <person name="Yamada K."/>
            <person name="Lim J."/>
            <person name="Dale J.M."/>
            <person name="Chen H."/>
            <person name="Shinn P."/>
            <person name="Palm C.J."/>
            <person name="Southwick A.M."/>
            <person name="Wu H.C."/>
            <person name="Kim C.J."/>
            <person name="Nguyen M."/>
            <person name="Pham P.K."/>
            <person name="Cheuk R.F."/>
            <person name="Karlin-Newmann G."/>
            <person name="Liu S.X."/>
            <person name="Lam B."/>
            <person name="Sakano H."/>
            <person name="Wu T."/>
            <person name="Yu G."/>
            <person name="Miranda M."/>
            <person name="Quach H.L."/>
            <person name="Tripp M."/>
            <person name="Chang C.H."/>
            <person name="Lee J.M."/>
            <person name="Toriumi M.J."/>
            <person name="Chan M.M."/>
            <person name="Tang C.C."/>
            <person name="Onodera C.S."/>
            <person name="Deng J.M."/>
            <person name="Akiyama K."/>
            <person name="Ansari Y."/>
            <person name="Arakawa T."/>
            <person name="Banh J."/>
            <person name="Banno F."/>
            <person name="Bowser L."/>
            <person name="Brooks S.Y."/>
            <person name="Carninci P."/>
            <person name="Chao Q."/>
            <person name="Choy N."/>
            <person name="Enju A."/>
            <person name="Goldsmith A.D."/>
            <person name="Gurjal M."/>
            <person name="Hansen N.F."/>
            <person name="Hayashizaki Y."/>
            <person name="Johnson-Hopson C."/>
            <person name="Hsuan V.W."/>
            <person name="Iida K."/>
            <person name="Karnes M."/>
            <person name="Khan S."/>
            <person name="Koesema E."/>
            <person name="Ishida J."/>
            <person name="Jiang P.X."/>
            <person name="Jones T."/>
            <person name="Kawai J."/>
            <person name="Kamiya A."/>
            <person name="Meyers C."/>
            <person name="Nakajima M."/>
            <person name="Narusaka M."/>
            <person name="Seki M."/>
            <person name="Sakurai T."/>
            <person name="Satou M."/>
            <person name="Tamse R."/>
            <person name="Vaysberg M."/>
            <person name="Wallender E.K."/>
            <person name="Wong C."/>
            <person name="Yamamura Y."/>
            <person name="Yuan S."/>
            <person name="Shinozaki K."/>
            <person name="Davis R.W."/>
            <person name="Theologis A."/>
            <person name="Ecker J.R."/>
        </authorList>
    </citation>
    <scope>NUCLEOTIDE SEQUENCE [LARGE SCALE MRNA]</scope>
    <source>
        <strain>cv. Columbia</strain>
    </source>
</reference>
<reference key="4">
    <citation type="journal article" date="2005" name="Plant J.">
        <title>Requirement of aminoacyl-tRNA synthetases for gametogenesis and embryo development in Arabidopsis.</title>
        <authorList>
            <person name="Berg M."/>
            <person name="Rogers R."/>
            <person name="Muralla R."/>
            <person name="Meinke D."/>
        </authorList>
    </citation>
    <scope>SUBCELLULAR LOCATION</scope>
</reference>
<reference key="5">
    <citation type="journal article" date="2005" name="Proc. Natl. Acad. Sci. U.S.A.">
        <title>Dual targeting is the rule for organellar aminoacyl-tRNA synthetases in Arabidopsis thaliana.</title>
        <authorList>
            <person name="Duchene A.-M."/>
            <person name="Giritch A."/>
            <person name="Hoffmann B."/>
            <person name="Cognat V."/>
            <person name="Lancelin D."/>
            <person name="Peeters N.M."/>
            <person name="Zaepfel M."/>
            <person name="Marechal-Drouard L."/>
            <person name="Small I.D."/>
        </authorList>
    </citation>
    <scope>SUBCELLULAR LOCATION</scope>
</reference>
<reference key="6">
    <citation type="journal article" date="2007" name="Mol. Cell. Proteomics">
        <title>Multidimensional protein identification technology (MudPIT) analysis of ubiquitinated proteins in plants.</title>
        <authorList>
            <person name="Maor R."/>
            <person name="Jones A."/>
            <person name="Nuehse T.S."/>
            <person name="Studholme D.J."/>
            <person name="Peck S.C."/>
            <person name="Shirasu K."/>
        </authorList>
    </citation>
    <scope>IDENTIFICATION BY MASS SPECTROMETRY [LARGE SCALE ANALYSIS]</scope>
    <source>
        <strain>cv. Landsberg erecta</strain>
    </source>
</reference>
<organism>
    <name type="scientific">Arabidopsis thaliana</name>
    <name type="common">Mouse-ear cress</name>
    <dbReference type="NCBI Taxonomy" id="3702"/>
    <lineage>
        <taxon>Eukaryota</taxon>
        <taxon>Viridiplantae</taxon>
        <taxon>Streptophyta</taxon>
        <taxon>Embryophyta</taxon>
        <taxon>Tracheophyta</taxon>
        <taxon>Spermatophyta</taxon>
        <taxon>Magnoliopsida</taxon>
        <taxon>eudicotyledons</taxon>
        <taxon>Gunneridae</taxon>
        <taxon>Pentapetalae</taxon>
        <taxon>rosids</taxon>
        <taxon>malvids</taxon>
        <taxon>Brassicales</taxon>
        <taxon>Brassicaceae</taxon>
        <taxon>Camelineae</taxon>
        <taxon>Arabidopsis</taxon>
    </lineage>
</organism>
<feature type="chain" id="PRO_0000433541" description="Proline--tRNA ligase, cytoplasmic">
    <location>
        <begin position="1"/>
        <end position="530"/>
    </location>
</feature>
<protein>
    <recommendedName>
        <fullName evidence="2">Proline--tRNA ligase, cytoplasmic</fullName>
        <ecNumber evidence="2">6.1.1.15</ecNumber>
    </recommendedName>
    <alternativeName>
        <fullName evidence="2">Prolyl-tRNA synthetase</fullName>
        <shortName evidence="2">ProRS</shortName>
    </alternativeName>
</protein>
<sequence length="530" mass="60756">MADPSEQKEKVVKEKKEKVKKEKVVKEKVAKASSSGQKKKDVKKETGLGLSVKKDENFGEWYSEVCKQDMIEYYDISGCYILRPWSMAIWEIMQIFFDAEIKKMKVKNCYFPLFVSPGVLEKEKDHIEGFAPEVAWVTKSGKSDLEVPIAIRPTSETVMYPYYSKWIRGHRDLPLKLNQWCNVVRWEFSNPTPFIRSREFLWQEGHTAFATKAEADEEVLQILELYRRIYEEYLAVPVVKGMKSENEKFAGGLYTTSVEAFIPNTGRGVQGATSHCLGQNFAKMFEINFENEKAETEMVWQNSWAYSTRTIGVMIMTHGDDKGLVLPPKVASVQVVVIPVPYKDANTQGIYDACTATASALCEAGIRAEEDLRDNYSPGWKYSDWEMKGVPLRIEIGPRDLENDQVRTVRRDNGVKEDIPRGSLVEHVKELLEKIQQNMYEVAKQKREACVQEVKTWDEFIKALNEKKLILAPWCDEEEVERDVKARTKGETGAAKTLCSPFDQPELPEGTLCFASGKPAKKWTYWGRSY</sequence>
<name>SYPC_ARATH</name>
<proteinExistence type="evidence at protein level"/>
<keyword id="KW-0030">Aminoacyl-tRNA synthetase</keyword>
<keyword id="KW-0067">ATP-binding</keyword>
<keyword id="KW-0963">Cytoplasm</keyword>
<keyword id="KW-0436">Ligase</keyword>
<keyword id="KW-0547">Nucleotide-binding</keyword>
<keyword id="KW-0648">Protein biosynthesis</keyword>
<keyword id="KW-1185">Reference proteome</keyword>
<evidence type="ECO:0000250" key="1">
    <source>
        <dbReference type="UniProtKB" id="P16659"/>
    </source>
</evidence>
<evidence type="ECO:0000305" key="2"/>
<evidence type="ECO:0000305" key="3">
    <source>
    </source>
</evidence>
<evidence type="ECO:0000305" key="4">
    <source>
    </source>
</evidence>
<evidence type="ECO:0000312" key="5">
    <source>
        <dbReference type="Araport" id="AT3G62120"/>
    </source>
</evidence>
<evidence type="ECO:0000312" key="6">
    <source>
        <dbReference type="EMBL" id="CAB71872.1"/>
    </source>
</evidence>
<gene>
    <name evidence="5" type="ordered locus">At3g62120</name>
    <name evidence="6" type="ORF">T17J13.80</name>
</gene>
<comment type="function">
    <text evidence="1">Catalyzes the attachment of proline to tRNA(Pro) in a two-step reaction: proline is first activated by ATP to form Pro-AMP and then transferred to the acceptor end of tRNA(Pro).</text>
</comment>
<comment type="catalytic activity">
    <reaction evidence="2">
        <text>tRNA(Pro) + L-proline + ATP = L-prolyl-tRNA(Pro) + AMP + diphosphate</text>
        <dbReference type="Rhea" id="RHEA:14305"/>
        <dbReference type="Rhea" id="RHEA-COMP:9700"/>
        <dbReference type="Rhea" id="RHEA-COMP:9702"/>
        <dbReference type="ChEBI" id="CHEBI:30616"/>
        <dbReference type="ChEBI" id="CHEBI:33019"/>
        <dbReference type="ChEBI" id="CHEBI:60039"/>
        <dbReference type="ChEBI" id="CHEBI:78442"/>
        <dbReference type="ChEBI" id="CHEBI:78532"/>
        <dbReference type="ChEBI" id="CHEBI:456215"/>
        <dbReference type="EC" id="6.1.1.15"/>
    </reaction>
</comment>
<comment type="subcellular location">
    <subcellularLocation>
        <location evidence="3 4">Cytoplasm</location>
        <location evidence="3 4">Cytosol</location>
    </subcellularLocation>
</comment>
<comment type="similarity">
    <text evidence="2">Belongs to the class-II aminoacyl-tRNA synthetase family.</text>
</comment>